<reference key="1">
    <citation type="journal article" date="2005" name="Nature">
        <title>The genome of the social amoeba Dictyostelium discoideum.</title>
        <authorList>
            <person name="Eichinger L."/>
            <person name="Pachebat J.A."/>
            <person name="Gloeckner G."/>
            <person name="Rajandream M.A."/>
            <person name="Sucgang R."/>
            <person name="Berriman M."/>
            <person name="Song J."/>
            <person name="Olsen R."/>
            <person name="Szafranski K."/>
            <person name="Xu Q."/>
            <person name="Tunggal B."/>
            <person name="Kummerfeld S."/>
            <person name="Madera M."/>
            <person name="Konfortov B.A."/>
            <person name="Rivero F."/>
            <person name="Bankier A.T."/>
            <person name="Lehmann R."/>
            <person name="Hamlin N."/>
            <person name="Davies R."/>
            <person name="Gaudet P."/>
            <person name="Fey P."/>
            <person name="Pilcher K."/>
            <person name="Chen G."/>
            <person name="Saunders D."/>
            <person name="Sodergren E.J."/>
            <person name="Davis P."/>
            <person name="Kerhornou A."/>
            <person name="Nie X."/>
            <person name="Hall N."/>
            <person name="Anjard C."/>
            <person name="Hemphill L."/>
            <person name="Bason N."/>
            <person name="Farbrother P."/>
            <person name="Desany B."/>
            <person name="Just E."/>
            <person name="Morio T."/>
            <person name="Rost R."/>
            <person name="Churcher C.M."/>
            <person name="Cooper J."/>
            <person name="Haydock S."/>
            <person name="van Driessche N."/>
            <person name="Cronin A."/>
            <person name="Goodhead I."/>
            <person name="Muzny D.M."/>
            <person name="Mourier T."/>
            <person name="Pain A."/>
            <person name="Lu M."/>
            <person name="Harper D."/>
            <person name="Lindsay R."/>
            <person name="Hauser H."/>
            <person name="James K.D."/>
            <person name="Quiles M."/>
            <person name="Madan Babu M."/>
            <person name="Saito T."/>
            <person name="Buchrieser C."/>
            <person name="Wardroper A."/>
            <person name="Felder M."/>
            <person name="Thangavelu M."/>
            <person name="Johnson D."/>
            <person name="Knights A."/>
            <person name="Loulseged H."/>
            <person name="Mungall K.L."/>
            <person name="Oliver K."/>
            <person name="Price C."/>
            <person name="Quail M.A."/>
            <person name="Urushihara H."/>
            <person name="Hernandez J."/>
            <person name="Rabbinowitsch E."/>
            <person name="Steffen D."/>
            <person name="Sanders M."/>
            <person name="Ma J."/>
            <person name="Kohara Y."/>
            <person name="Sharp S."/>
            <person name="Simmonds M.N."/>
            <person name="Spiegler S."/>
            <person name="Tivey A."/>
            <person name="Sugano S."/>
            <person name="White B."/>
            <person name="Walker D."/>
            <person name="Woodward J.R."/>
            <person name="Winckler T."/>
            <person name="Tanaka Y."/>
            <person name="Shaulsky G."/>
            <person name="Schleicher M."/>
            <person name="Weinstock G.M."/>
            <person name="Rosenthal A."/>
            <person name="Cox E.C."/>
            <person name="Chisholm R.L."/>
            <person name="Gibbs R.A."/>
            <person name="Loomis W.F."/>
            <person name="Platzer M."/>
            <person name="Kay R.R."/>
            <person name="Williams J.G."/>
            <person name="Dear P.H."/>
            <person name="Noegel A.A."/>
            <person name="Barrell B.G."/>
            <person name="Kuspa A."/>
        </authorList>
    </citation>
    <scope>NUCLEOTIDE SEQUENCE [LARGE SCALE GENOMIC DNA]</scope>
    <source>
        <strain>AX4</strain>
    </source>
</reference>
<reference key="2">
    <citation type="journal article" date="2006" name="Mol. Cell. Proteomics">
        <title>Proteomics fingerprinting of phagosome maturation and evidence for the role of a Galpha during uptake.</title>
        <authorList>
            <person name="Gotthardt D."/>
            <person name="Blancheteau V."/>
            <person name="Bosserhoff A."/>
            <person name="Ruppert T."/>
            <person name="Delorenzi M."/>
            <person name="Soldati T."/>
        </authorList>
    </citation>
    <scope>IDENTIFICATION BY MASS SPECTROMETRY [LARGE SCALE ANALYSIS]</scope>
    <source>
        <strain>AX2</strain>
    </source>
</reference>
<evidence type="ECO:0000250" key="1">
    <source>
        <dbReference type="UniProtKB" id="O59080"/>
    </source>
</evidence>
<evidence type="ECO:0000250" key="2">
    <source>
        <dbReference type="UniProtKB" id="Q03148"/>
    </source>
</evidence>
<evidence type="ECO:0000305" key="3"/>
<keyword id="KW-0456">Lyase</keyword>
<keyword id="KW-0663">Pyridoxal phosphate</keyword>
<keyword id="KW-1185">Reference proteome</keyword>
<keyword id="KW-0704">Schiff base</keyword>
<sequence>MENLTENQATNNNSPFRIKSSLAQMLKGGVIMDVVTPEQARIAEEAGACAVMALEKIPADIRHFGGVARMSDPGMIKEIMNAVTIPVMAKVRIGHFVEAQILQEIGVDYIDESEVLTIADNENHIDKSEFKVPFVCGCRNLGEALRRISEGAAMIRTKGEAGTGDVVEAVRHARAVNKEIKKIQNMDPHELYTYAKEIQAPLELVKEVKRLGRLPVVNFAAGGVATPADAAMMMQLGMDGVFVGSGIFKSGDPAKRAKAIVQAVTHFNNPQIVAKVSENLGEAMVGINVDTLKDKENQNWSTKEK</sequence>
<gene>
    <name type="primary">pdx1</name>
    <name type="ORF">DDB_G0288299</name>
</gene>
<feature type="chain" id="PRO_0000328202" description="Probable pyridoxal 5'-phosphate synthase subunit pdx1">
    <location>
        <begin position="1"/>
        <end position="305"/>
    </location>
</feature>
<feature type="active site" description="Schiff-base intermediate with D-ribose 5-phosphate" evidence="1">
    <location>
        <position position="90"/>
    </location>
</feature>
<feature type="binding site" evidence="1">
    <location>
        <position position="33"/>
    </location>
    <ligand>
        <name>D-ribose 5-phosphate</name>
        <dbReference type="ChEBI" id="CHEBI:78346"/>
    </ligand>
</feature>
<feature type="binding site" evidence="1">
    <location>
        <position position="162"/>
    </location>
    <ligand>
        <name>D-ribose 5-phosphate</name>
        <dbReference type="ChEBI" id="CHEBI:78346"/>
    </ligand>
</feature>
<feature type="binding site" evidence="2">
    <location>
        <position position="174"/>
    </location>
    <ligand>
        <name>D-glyceraldehyde 3-phosphate</name>
        <dbReference type="ChEBI" id="CHEBI:59776"/>
    </ligand>
</feature>
<feature type="binding site" evidence="1">
    <location>
        <position position="223"/>
    </location>
    <ligand>
        <name>D-ribose 5-phosphate</name>
        <dbReference type="ChEBI" id="CHEBI:78346"/>
    </ligand>
</feature>
<feature type="binding site" evidence="1">
    <location>
        <begin position="244"/>
        <end position="245"/>
    </location>
    <ligand>
        <name>D-ribose 5-phosphate</name>
        <dbReference type="ChEBI" id="CHEBI:78346"/>
    </ligand>
</feature>
<accession>Q54J47</accession>
<organism>
    <name type="scientific">Dictyostelium discoideum</name>
    <name type="common">Social amoeba</name>
    <dbReference type="NCBI Taxonomy" id="44689"/>
    <lineage>
        <taxon>Eukaryota</taxon>
        <taxon>Amoebozoa</taxon>
        <taxon>Evosea</taxon>
        <taxon>Eumycetozoa</taxon>
        <taxon>Dictyostelia</taxon>
        <taxon>Dictyosteliales</taxon>
        <taxon>Dictyosteliaceae</taxon>
        <taxon>Dictyostelium</taxon>
    </lineage>
</organism>
<dbReference type="EC" id="4.3.3.6"/>
<dbReference type="EMBL" id="AAFI02000109">
    <property type="protein sequence ID" value="EAL63292.1"/>
    <property type="molecule type" value="Genomic_DNA"/>
</dbReference>
<dbReference type="RefSeq" id="XP_636800.1">
    <property type="nucleotide sequence ID" value="XM_631708.1"/>
</dbReference>
<dbReference type="SMR" id="Q54J47"/>
<dbReference type="FunCoup" id="Q54J47">
    <property type="interactions" value="161"/>
</dbReference>
<dbReference type="STRING" id="44689.Q54J47"/>
<dbReference type="PaxDb" id="44689-DDB0237963"/>
<dbReference type="EnsemblProtists" id="EAL63292">
    <property type="protein sequence ID" value="EAL63292"/>
    <property type="gene ID" value="DDB_G0288299"/>
</dbReference>
<dbReference type="GeneID" id="8626557"/>
<dbReference type="KEGG" id="ddi:DDB_G0288299"/>
<dbReference type="dictyBase" id="DDB_G0288299">
    <property type="gene designation" value="pdx1"/>
</dbReference>
<dbReference type="VEuPathDB" id="AmoebaDB:DDB_G0288299"/>
<dbReference type="eggNOG" id="KOG1606">
    <property type="taxonomic scope" value="Eukaryota"/>
</dbReference>
<dbReference type="HOGENOM" id="CLU_055352_1_0_1"/>
<dbReference type="InParanoid" id="Q54J47"/>
<dbReference type="OMA" id="RYANRGW"/>
<dbReference type="PhylomeDB" id="Q54J47"/>
<dbReference type="UniPathway" id="UPA00245"/>
<dbReference type="PRO" id="PR:Q54J47"/>
<dbReference type="Proteomes" id="UP000002195">
    <property type="component" value="Chromosome 5"/>
</dbReference>
<dbReference type="GO" id="GO:0045335">
    <property type="term" value="C:phagocytic vesicle"/>
    <property type="evidence" value="ECO:0007005"/>
    <property type="project" value="dictyBase"/>
</dbReference>
<dbReference type="GO" id="GO:0016843">
    <property type="term" value="F:amine-lyase activity"/>
    <property type="evidence" value="ECO:0000318"/>
    <property type="project" value="GO_Central"/>
</dbReference>
<dbReference type="GO" id="GO:0036381">
    <property type="term" value="F:pyridoxal 5'-phosphate synthase (glutamine hydrolysing) activity"/>
    <property type="evidence" value="ECO:0007669"/>
    <property type="project" value="UniProtKB-EC"/>
</dbReference>
<dbReference type="GO" id="GO:0006520">
    <property type="term" value="P:amino acid metabolic process"/>
    <property type="evidence" value="ECO:0000318"/>
    <property type="project" value="GO_Central"/>
</dbReference>
<dbReference type="GO" id="GO:0042823">
    <property type="term" value="P:pyridoxal phosphate biosynthetic process"/>
    <property type="evidence" value="ECO:0000318"/>
    <property type="project" value="GO_Central"/>
</dbReference>
<dbReference type="GO" id="GO:0008615">
    <property type="term" value="P:pyridoxine biosynthetic process"/>
    <property type="evidence" value="ECO:0000318"/>
    <property type="project" value="GO_Central"/>
</dbReference>
<dbReference type="GO" id="GO:0008614">
    <property type="term" value="P:pyridoxine metabolic process"/>
    <property type="evidence" value="ECO:0000250"/>
    <property type="project" value="dictyBase"/>
</dbReference>
<dbReference type="CDD" id="cd04727">
    <property type="entry name" value="pdxS"/>
    <property type="match status" value="1"/>
</dbReference>
<dbReference type="FunFam" id="3.20.20.70:FF:000001">
    <property type="entry name" value="Pyridoxine biosynthesis protein PDX1"/>
    <property type="match status" value="1"/>
</dbReference>
<dbReference type="Gene3D" id="3.20.20.70">
    <property type="entry name" value="Aldolase class I"/>
    <property type="match status" value="1"/>
</dbReference>
<dbReference type="HAMAP" id="MF_01824">
    <property type="entry name" value="PdxS"/>
    <property type="match status" value="1"/>
</dbReference>
<dbReference type="InterPro" id="IPR013785">
    <property type="entry name" value="Aldolase_TIM"/>
</dbReference>
<dbReference type="InterPro" id="IPR001852">
    <property type="entry name" value="PdxS/SNZ"/>
</dbReference>
<dbReference type="InterPro" id="IPR033755">
    <property type="entry name" value="PdxS/SNZ_N"/>
</dbReference>
<dbReference type="InterPro" id="IPR011060">
    <property type="entry name" value="RibuloseP-bd_barrel"/>
</dbReference>
<dbReference type="NCBIfam" id="NF003215">
    <property type="entry name" value="PRK04180.1"/>
    <property type="match status" value="1"/>
</dbReference>
<dbReference type="NCBIfam" id="TIGR00343">
    <property type="entry name" value="pyridoxal 5'-phosphate synthase lyase subunit PdxS"/>
    <property type="match status" value="1"/>
</dbReference>
<dbReference type="PANTHER" id="PTHR31829">
    <property type="entry name" value="PYRIDOXAL 5'-PHOSPHATE SYNTHASE SUBUNIT SNZ1-RELATED"/>
    <property type="match status" value="1"/>
</dbReference>
<dbReference type="PANTHER" id="PTHR31829:SF0">
    <property type="entry name" value="PYRIDOXAL 5'-PHOSPHATE SYNTHASE SUBUNIT SNZ1-RELATED"/>
    <property type="match status" value="1"/>
</dbReference>
<dbReference type="Pfam" id="PF01680">
    <property type="entry name" value="SOR_SNZ"/>
    <property type="match status" value="1"/>
</dbReference>
<dbReference type="PIRSF" id="PIRSF029271">
    <property type="entry name" value="Pdx1"/>
    <property type="match status" value="1"/>
</dbReference>
<dbReference type="SUPFAM" id="SSF51366">
    <property type="entry name" value="Ribulose-phoshate binding barrel"/>
    <property type="match status" value="1"/>
</dbReference>
<dbReference type="PROSITE" id="PS01235">
    <property type="entry name" value="PDXS_SNZ_1"/>
    <property type="match status" value="1"/>
</dbReference>
<dbReference type="PROSITE" id="PS51129">
    <property type="entry name" value="PDXS_SNZ_2"/>
    <property type="match status" value="1"/>
</dbReference>
<proteinExistence type="evidence at protein level"/>
<name>PDX1_DICDI</name>
<comment type="function">
    <text evidence="2">Catalyzes the formation of pyridoxal 5'-phosphate from ribose 5-phosphate (RBP), glyceraldehyde 3-phosphate (G3P) and ammonia. The ammonia is provided by pdx2. Can also use ribulose 5-phosphate and dihydroxyacetone phosphate as substrates, resulting from enzyme-catalyzed isomerization of RBP and G3P, respectively.</text>
</comment>
<comment type="catalytic activity">
    <reaction evidence="2">
        <text>aldehydo-D-ribose 5-phosphate + D-glyceraldehyde 3-phosphate + L-glutamine = pyridoxal 5'-phosphate + L-glutamate + phosphate + 3 H2O + H(+)</text>
        <dbReference type="Rhea" id="RHEA:31507"/>
        <dbReference type="ChEBI" id="CHEBI:15377"/>
        <dbReference type="ChEBI" id="CHEBI:15378"/>
        <dbReference type="ChEBI" id="CHEBI:29985"/>
        <dbReference type="ChEBI" id="CHEBI:43474"/>
        <dbReference type="ChEBI" id="CHEBI:58273"/>
        <dbReference type="ChEBI" id="CHEBI:58359"/>
        <dbReference type="ChEBI" id="CHEBI:59776"/>
        <dbReference type="ChEBI" id="CHEBI:597326"/>
        <dbReference type="EC" id="4.3.3.6"/>
    </reaction>
</comment>
<comment type="pathway">
    <text>Cofactor biosynthesis; pyridoxal 5'-phosphate biosynthesis.</text>
</comment>
<comment type="subunit">
    <text evidence="2">Homohexamer.</text>
</comment>
<comment type="similarity">
    <text evidence="3">Belongs to the PdxS/SNZ family.</text>
</comment>
<protein>
    <recommendedName>
        <fullName>Probable pyridoxal 5'-phosphate synthase subunit pdx1</fullName>
        <shortName>PLP synthase subunit pdx1</shortName>
        <ecNumber>4.3.3.6</ecNumber>
    </recommendedName>
</protein>